<name>LSG1_MACFA</name>
<comment type="function">
    <text evidence="2">Functions as a GTPase. May act by mediating the release of NMD3 from the 60S ribosomal subunit after export into the cytoplasm during the 60S ribosomal subunit maturation.</text>
</comment>
<comment type="catalytic activity">
    <reaction evidence="2">
        <text>GTP + H2O = GDP + phosphate + H(+)</text>
        <dbReference type="Rhea" id="RHEA:19669"/>
        <dbReference type="ChEBI" id="CHEBI:15377"/>
        <dbReference type="ChEBI" id="CHEBI:15378"/>
        <dbReference type="ChEBI" id="CHEBI:37565"/>
        <dbReference type="ChEBI" id="CHEBI:43474"/>
        <dbReference type="ChEBI" id="CHEBI:58189"/>
    </reaction>
</comment>
<comment type="subcellular location">
    <subcellularLocation>
        <location evidence="2">Cytoplasm</location>
    </subcellularLocation>
    <subcellularLocation>
        <location evidence="2">Endoplasmic reticulum</location>
    </subcellularLocation>
    <subcellularLocation>
        <location evidence="2">Nucleus</location>
        <location evidence="2">Cajal body</location>
    </subcellularLocation>
    <text evidence="2">between the cytosol and Cajal bodies via a XPO1/CRM1-dependent export mechanism.</text>
</comment>
<comment type="domain">
    <text evidence="2">In contrast to other GTP-binding proteins, this family is characterized by a circular permutation of the GTPase motifs described by a G4-G1-G3 pattern.</text>
</comment>
<comment type="similarity">
    <text evidence="4">Belongs to the TRAFAC class YlqF/YawG GTPase family. LSG1 subfamily.</text>
</comment>
<feature type="chain" id="PRO_0000324554" description="Large subunit GTPase 1 homolog">
    <location>
        <begin position="1"/>
        <end position="653"/>
    </location>
</feature>
<feature type="domain" description="CP-type G" evidence="4">
    <location>
        <begin position="164"/>
        <end position="445"/>
    </location>
</feature>
<feature type="region of interest" description="Disordered" evidence="5">
    <location>
        <begin position="1"/>
        <end position="31"/>
    </location>
</feature>
<feature type="region of interest" description="Disordered" evidence="5">
    <location>
        <begin position="251"/>
        <end position="358"/>
    </location>
</feature>
<feature type="region of interest" description="Disordered" evidence="5">
    <location>
        <begin position="630"/>
        <end position="653"/>
    </location>
</feature>
<feature type="compositionally biased region" description="Basic residues" evidence="5">
    <location>
        <begin position="16"/>
        <end position="28"/>
    </location>
</feature>
<feature type="compositionally biased region" description="Basic and acidic residues" evidence="5">
    <location>
        <begin position="258"/>
        <end position="288"/>
    </location>
</feature>
<feature type="compositionally biased region" description="Acidic residues" evidence="5">
    <location>
        <begin position="299"/>
        <end position="333"/>
    </location>
</feature>
<feature type="compositionally biased region" description="Basic residues" evidence="5">
    <location>
        <begin position="637"/>
        <end position="647"/>
    </location>
</feature>
<feature type="binding site" evidence="3">
    <location>
        <begin position="212"/>
        <end position="215"/>
    </location>
    <ligand>
        <name>GTP</name>
        <dbReference type="ChEBI" id="CHEBI:37565"/>
    </ligand>
</feature>
<feature type="binding site" evidence="3">
    <location>
        <begin position="394"/>
        <end position="401"/>
    </location>
    <ligand>
        <name>GTP</name>
        <dbReference type="ChEBI" id="CHEBI:37565"/>
    </ligand>
</feature>
<feature type="binding site" evidence="3">
    <location>
        <begin position="438"/>
        <end position="441"/>
    </location>
    <ligand>
        <name>GTP</name>
        <dbReference type="ChEBI" id="CHEBI:37565"/>
    </ligand>
</feature>
<feature type="modified residue" description="Phosphoserine" evidence="2">
    <location>
        <position position="93"/>
    </location>
</feature>
<feature type="modified residue" description="Phosphoserine" evidence="2">
    <location>
        <position position="97"/>
    </location>
</feature>
<feature type="modified residue" description="Phosphoserine" evidence="2">
    <location>
        <position position="252"/>
    </location>
</feature>
<accession>Q4R8L2</accession>
<sequence length="653" mass="74475">MGRRRAPAGGSLGRALMRHQTQRSRSHRHTDSWLHTSELNDGYDWGRLNLQSVTEESSLDDFLATAELAGTEFVAEKLNIKFVPAEARTGLLSFEESQRIKKLHEENKQFLCIPRRPNWNKNTTPEELKQAEKDNFLEWRRQLVRLEEEQKLILTSFERNLDFWRQLWRVIERSDIVVQIVDARNPLLFRCEDLECYVKEIDASKENVILINKADLLTAEQRSAWATYFEKEDVKVIFWSALAGAIHLNGDSEEEANKDDRQSNTAEFEHSSFDEAEISHSETEHLPARDSPSLSENLTTDEDDSEYEDCPEEEEDDWQTCSEEDGPEEEDCGQDWKESSAADSEAQSRKTPQKRQLHNFSHLVSKQELLELFKELHTGRKVKDGQLTIGTGWGYPNVGKSSTINTIMGNKKVSVSATPGHTKHFQTLYVEPGLCLCDCPGLVMPSFVSTKAEMTCSGILPIDQMRDHVPPVSLVCQNIPRHVLEATYGINIIKPREDEDPHRPPTSEELLTAYGYMRGFMTAHGQPDQPRSARYILKDYVNGKLLYCHPPPGRDPVTFQHQHQRLPENKTNGDEIKMRPGRNKKVKQIENIVDKTFFHQENVRALTKGVQAVMGYKPGSGVVTAATVSSENGAGKPWKKHGNRNKKEKSCRL</sequence>
<protein>
    <recommendedName>
        <fullName evidence="1">Large subunit GTPase 1 homolog</fullName>
        <ecNumber evidence="2">3.6.5.-</ecNumber>
    </recommendedName>
</protein>
<evidence type="ECO:0000250" key="1">
    <source>
        <dbReference type="UniProtKB" id="P53145"/>
    </source>
</evidence>
<evidence type="ECO:0000250" key="2">
    <source>
        <dbReference type="UniProtKB" id="Q9H089"/>
    </source>
</evidence>
<evidence type="ECO:0000255" key="3"/>
<evidence type="ECO:0000255" key="4">
    <source>
        <dbReference type="PROSITE-ProRule" id="PRU01058"/>
    </source>
</evidence>
<evidence type="ECO:0000256" key="5">
    <source>
        <dbReference type="SAM" id="MobiDB-lite"/>
    </source>
</evidence>
<dbReference type="EC" id="3.6.5.-" evidence="2"/>
<dbReference type="EMBL" id="AB168440">
    <property type="protein sequence ID" value="BAE00560.1"/>
    <property type="molecule type" value="mRNA"/>
</dbReference>
<dbReference type="SMR" id="Q4R8L2"/>
<dbReference type="STRING" id="9541.ENSMFAP00000042295"/>
<dbReference type="eggNOG" id="KOG1424">
    <property type="taxonomic scope" value="Eukaryota"/>
</dbReference>
<dbReference type="Proteomes" id="UP000233100">
    <property type="component" value="Unplaced"/>
</dbReference>
<dbReference type="GO" id="GO:0015030">
    <property type="term" value="C:Cajal body"/>
    <property type="evidence" value="ECO:0000250"/>
    <property type="project" value="UniProtKB"/>
</dbReference>
<dbReference type="GO" id="GO:0005829">
    <property type="term" value="C:cytosol"/>
    <property type="evidence" value="ECO:0007669"/>
    <property type="project" value="TreeGrafter"/>
</dbReference>
<dbReference type="GO" id="GO:0005783">
    <property type="term" value="C:endoplasmic reticulum"/>
    <property type="evidence" value="ECO:0000250"/>
    <property type="project" value="UniProtKB"/>
</dbReference>
<dbReference type="GO" id="GO:0005525">
    <property type="term" value="F:GTP binding"/>
    <property type="evidence" value="ECO:0000250"/>
    <property type="project" value="UniProtKB"/>
</dbReference>
<dbReference type="GO" id="GO:0003924">
    <property type="term" value="F:GTPase activity"/>
    <property type="evidence" value="ECO:0007669"/>
    <property type="project" value="InterPro"/>
</dbReference>
<dbReference type="GO" id="GO:0051168">
    <property type="term" value="P:nuclear export"/>
    <property type="evidence" value="ECO:0000250"/>
    <property type="project" value="UniProtKB"/>
</dbReference>
<dbReference type="GO" id="GO:0015031">
    <property type="term" value="P:protein transport"/>
    <property type="evidence" value="ECO:0007669"/>
    <property type="project" value="UniProtKB-KW"/>
</dbReference>
<dbReference type="GO" id="GO:0000054">
    <property type="term" value="P:ribosomal subunit export from nucleus"/>
    <property type="evidence" value="ECO:0007669"/>
    <property type="project" value="TreeGrafter"/>
</dbReference>
<dbReference type="CDD" id="cd01857">
    <property type="entry name" value="HSR1_MMR1"/>
    <property type="match status" value="1"/>
</dbReference>
<dbReference type="Gene3D" id="3.40.50.300">
    <property type="entry name" value="P-loop containing nucleotide triphosphate hydrolases"/>
    <property type="match status" value="1"/>
</dbReference>
<dbReference type="InterPro" id="IPR030378">
    <property type="entry name" value="G_CP_dom"/>
</dbReference>
<dbReference type="InterPro" id="IPR043358">
    <property type="entry name" value="GNL1-like"/>
</dbReference>
<dbReference type="InterPro" id="IPR006073">
    <property type="entry name" value="GTP-bd"/>
</dbReference>
<dbReference type="InterPro" id="IPR027417">
    <property type="entry name" value="P-loop_NTPase"/>
</dbReference>
<dbReference type="PANTHER" id="PTHR45709:SF2">
    <property type="entry name" value="LARGE SUBUNIT GTPASE 1 HOMOLOG"/>
    <property type="match status" value="1"/>
</dbReference>
<dbReference type="PANTHER" id="PTHR45709">
    <property type="entry name" value="LARGE SUBUNIT GTPASE 1 HOMOLOG-RELATED"/>
    <property type="match status" value="1"/>
</dbReference>
<dbReference type="Pfam" id="PF01926">
    <property type="entry name" value="MMR_HSR1"/>
    <property type="match status" value="1"/>
</dbReference>
<dbReference type="SUPFAM" id="SSF52540">
    <property type="entry name" value="P-loop containing nucleoside triphosphate hydrolases"/>
    <property type="match status" value="1"/>
</dbReference>
<dbReference type="PROSITE" id="PS51721">
    <property type="entry name" value="G_CP"/>
    <property type="match status" value="1"/>
</dbReference>
<gene>
    <name evidence="2" type="primary">LSG1</name>
    <name type="ORF">QtsA-12215</name>
</gene>
<organism>
    <name type="scientific">Macaca fascicularis</name>
    <name type="common">Crab-eating macaque</name>
    <name type="synonym">Cynomolgus monkey</name>
    <dbReference type="NCBI Taxonomy" id="9541"/>
    <lineage>
        <taxon>Eukaryota</taxon>
        <taxon>Metazoa</taxon>
        <taxon>Chordata</taxon>
        <taxon>Craniata</taxon>
        <taxon>Vertebrata</taxon>
        <taxon>Euteleostomi</taxon>
        <taxon>Mammalia</taxon>
        <taxon>Eutheria</taxon>
        <taxon>Euarchontoglires</taxon>
        <taxon>Primates</taxon>
        <taxon>Haplorrhini</taxon>
        <taxon>Catarrhini</taxon>
        <taxon>Cercopithecidae</taxon>
        <taxon>Cercopithecinae</taxon>
        <taxon>Macaca</taxon>
    </lineage>
</organism>
<keyword id="KW-0963">Cytoplasm</keyword>
<keyword id="KW-0256">Endoplasmic reticulum</keyword>
<keyword id="KW-0342">GTP-binding</keyword>
<keyword id="KW-0378">Hydrolase</keyword>
<keyword id="KW-0547">Nucleotide-binding</keyword>
<keyword id="KW-0539">Nucleus</keyword>
<keyword id="KW-0597">Phosphoprotein</keyword>
<keyword id="KW-0653">Protein transport</keyword>
<keyword id="KW-1185">Reference proteome</keyword>
<keyword id="KW-0813">Transport</keyword>
<reference key="1">
    <citation type="submission" date="2005-06" db="EMBL/GenBank/DDBJ databases">
        <title>DNA sequences of macaque genes expressed in brain or testis and its evolutionary implications.</title>
        <authorList>
            <consortium name="International consortium for macaque cDNA sequencing and analysis"/>
        </authorList>
    </citation>
    <scope>NUCLEOTIDE SEQUENCE [LARGE SCALE MRNA]</scope>
    <source>
        <tissue>Testis</tissue>
    </source>
</reference>
<proteinExistence type="evidence at transcript level"/>